<reference key="1">
    <citation type="journal article" date="2007" name="Photosyn. Res.">
        <title>Complete nucleotide sequence of the freshwater unicellular cyanobacterium Synechococcus elongatus PCC 6301 chromosome: gene content and organization.</title>
        <authorList>
            <person name="Sugita C."/>
            <person name="Ogata K."/>
            <person name="Shikata M."/>
            <person name="Jikuya H."/>
            <person name="Takano J."/>
            <person name="Furumichi M."/>
            <person name="Kanehisa M."/>
            <person name="Omata T."/>
            <person name="Sugiura M."/>
            <person name="Sugita M."/>
        </authorList>
    </citation>
    <scope>NUCLEOTIDE SEQUENCE [LARGE SCALE GENOMIC DNA]</scope>
    <source>
        <strain>ATCC 27144 / PCC 6301 / SAUG 1402/1</strain>
    </source>
</reference>
<feature type="chain" id="PRO_0000104394" description="Large ribosomal subunit protein uL11">
    <location>
        <begin position="1"/>
        <end position="141"/>
    </location>
</feature>
<proteinExistence type="inferred from homology"/>
<dbReference type="EMBL" id="AP008231">
    <property type="protein sequence ID" value="BAD79081.1"/>
    <property type="molecule type" value="Genomic_DNA"/>
</dbReference>
<dbReference type="RefSeq" id="WP_011243203.1">
    <property type="nucleotide sequence ID" value="NC_006576.1"/>
</dbReference>
<dbReference type="SMR" id="Q5N3N9"/>
<dbReference type="KEGG" id="syc:syc0891_d"/>
<dbReference type="eggNOG" id="COG0080">
    <property type="taxonomic scope" value="Bacteria"/>
</dbReference>
<dbReference type="Proteomes" id="UP000001175">
    <property type="component" value="Chromosome"/>
</dbReference>
<dbReference type="GO" id="GO:0022625">
    <property type="term" value="C:cytosolic large ribosomal subunit"/>
    <property type="evidence" value="ECO:0007669"/>
    <property type="project" value="TreeGrafter"/>
</dbReference>
<dbReference type="GO" id="GO:0070180">
    <property type="term" value="F:large ribosomal subunit rRNA binding"/>
    <property type="evidence" value="ECO:0007669"/>
    <property type="project" value="UniProtKB-UniRule"/>
</dbReference>
<dbReference type="GO" id="GO:0003735">
    <property type="term" value="F:structural constituent of ribosome"/>
    <property type="evidence" value="ECO:0007669"/>
    <property type="project" value="InterPro"/>
</dbReference>
<dbReference type="GO" id="GO:0006412">
    <property type="term" value="P:translation"/>
    <property type="evidence" value="ECO:0007669"/>
    <property type="project" value="UniProtKB-UniRule"/>
</dbReference>
<dbReference type="CDD" id="cd00349">
    <property type="entry name" value="Ribosomal_L11"/>
    <property type="match status" value="1"/>
</dbReference>
<dbReference type="FunFam" id="1.10.10.250:FF:000001">
    <property type="entry name" value="50S ribosomal protein L11"/>
    <property type="match status" value="1"/>
</dbReference>
<dbReference type="FunFam" id="3.30.1550.10:FF:000001">
    <property type="entry name" value="50S ribosomal protein L11"/>
    <property type="match status" value="1"/>
</dbReference>
<dbReference type="Gene3D" id="1.10.10.250">
    <property type="entry name" value="Ribosomal protein L11, C-terminal domain"/>
    <property type="match status" value="1"/>
</dbReference>
<dbReference type="Gene3D" id="3.30.1550.10">
    <property type="entry name" value="Ribosomal protein L11/L12, N-terminal domain"/>
    <property type="match status" value="1"/>
</dbReference>
<dbReference type="HAMAP" id="MF_00736">
    <property type="entry name" value="Ribosomal_uL11"/>
    <property type="match status" value="1"/>
</dbReference>
<dbReference type="InterPro" id="IPR000911">
    <property type="entry name" value="Ribosomal_uL11"/>
</dbReference>
<dbReference type="InterPro" id="IPR006519">
    <property type="entry name" value="Ribosomal_uL11_bac-typ"/>
</dbReference>
<dbReference type="InterPro" id="IPR020783">
    <property type="entry name" value="Ribosomal_uL11_C"/>
</dbReference>
<dbReference type="InterPro" id="IPR036769">
    <property type="entry name" value="Ribosomal_uL11_C_sf"/>
</dbReference>
<dbReference type="InterPro" id="IPR020785">
    <property type="entry name" value="Ribosomal_uL11_CS"/>
</dbReference>
<dbReference type="InterPro" id="IPR020784">
    <property type="entry name" value="Ribosomal_uL11_N"/>
</dbReference>
<dbReference type="InterPro" id="IPR036796">
    <property type="entry name" value="Ribosomal_uL11_N_sf"/>
</dbReference>
<dbReference type="NCBIfam" id="TIGR01632">
    <property type="entry name" value="L11_bact"/>
    <property type="match status" value="1"/>
</dbReference>
<dbReference type="PANTHER" id="PTHR11661">
    <property type="entry name" value="60S RIBOSOMAL PROTEIN L12"/>
    <property type="match status" value="1"/>
</dbReference>
<dbReference type="PANTHER" id="PTHR11661:SF1">
    <property type="entry name" value="LARGE RIBOSOMAL SUBUNIT PROTEIN UL11M"/>
    <property type="match status" value="1"/>
</dbReference>
<dbReference type="Pfam" id="PF00298">
    <property type="entry name" value="Ribosomal_L11"/>
    <property type="match status" value="1"/>
</dbReference>
<dbReference type="Pfam" id="PF03946">
    <property type="entry name" value="Ribosomal_L11_N"/>
    <property type="match status" value="1"/>
</dbReference>
<dbReference type="SMART" id="SM00649">
    <property type="entry name" value="RL11"/>
    <property type="match status" value="1"/>
</dbReference>
<dbReference type="SUPFAM" id="SSF54747">
    <property type="entry name" value="Ribosomal L11/L12e N-terminal domain"/>
    <property type="match status" value="1"/>
</dbReference>
<dbReference type="SUPFAM" id="SSF46906">
    <property type="entry name" value="Ribosomal protein L11, C-terminal domain"/>
    <property type="match status" value="1"/>
</dbReference>
<dbReference type="PROSITE" id="PS00359">
    <property type="entry name" value="RIBOSOMAL_L11"/>
    <property type="match status" value="1"/>
</dbReference>
<evidence type="ECO:0000255" key="1">
    <source>
        <dbReference type="HAMAP-Rule" id="MF_00736"/>
    </source>
</evidence>
<evidence type="ECO:0000305" key="2"/>
<protein>
    <recommendedName>
        <fullName evidence="1">Large ribosomal subunit protein uL11</fullName>
    </recommendedName>
    <alternativeName>
        <fullName evidence="2">50S ribosomal protein L11</fullName>
    </alternativeName>
</protein>
<name>RL11_SYNP6</name>
<comment type="function">
    <text evidence="1">Forms part of the ribosomal stalk which helps the ribosome interact with GTP-bound translation factors.</text>
</comment>
<comment type="subunit">
    <text evidence="1">Part of the ribosomal stalk of the 50S ribosomal subunit. Interacts with L10 and the large rRNA to form the base of the stalk. L10 forms an elongated spine to which L12 dimers bind in a sequential fashion forming a multimeric L10(L12)X complex.</text>
</comment>
<comment type="PTM">
    <text evidence="1">One or more lysine residues are methylated.</text>
</comment>
<comment type="similarity">
    <text evidence="1">Belongs to the universal ribosomal protein uL11 family.</text>
</comment>
<keyword id="KW-0488">Methylation</keyword>
<keyword id="KW-0687">Ribonucleoprotein</keyword>
<keyword id="KW-0689">Ribosomal protein</keyword>
<keyword id="KW-0694">RNA-binding</keyword>
<keyword id="KW-0699">rRNA-binding</keyword>
<accession>Q5N3N9</accession>
<organism>
    <name type="scientific">Synechococcus sp. (strain ATCC 27144 / PCC 6301 / SAUG 1402/1)</name>
    <name type="common">Anacystis nidulans</name>
    <dbReference type="NCBI Taxonomy" id="269084"/>
    <lineage>
        <taxon>Bacteria</taxon>
        <taxon>Bacillati</taxon>
        <taxon>Cyanobacteriota</taxon>
        <taxon>Cyanophyceae</taxon>
        <taxon>Synechococcales</taxon>
        <taxon>Synechococcaceae</taxon>
        <taxon>Synechococcus</taxon>
    </lineage>
</organism>
<sequence length="141" mass="14937">MAKKVVALIKLALPAGKANPAPPVGPALGQHGVNIMAFCKEYNARTQDKVGLVIPVEISVFEDRSFTFILKTPPASVLIAKAAGIERGSGNPNKTKVGKITTAQLREIAETKLPDFNTKNVEAAMRIVEGTARNMGVTIAD</sequence>
<gene>
    <name evidence="1" type="primary">rplK</name>
    <name evidence="1" type="synonym">rpl11</name>
    <name type="ordered locus">syc0891_d</name>
</gene>